<keyword id="KW-1003">Cell membrane</keyword>
<keyword id="KW-0325">Glycoprotein</keyword>
<keyword id="KW-0336">GPI-anchor</keyword>
<keyword id="KW-0449">Lipoprotein</keyword>
<keyword id="KW-0472">Membrane</keyword>
<keyword id="KW-1185">Reference proteome</keyword>
<keyword id="KW-0732">Signal</keyword>
<keyword id="KW-0843">Virulence</keyword>
<reference key="1">
    <citation type="journal article" date="2004" name="Proc. Natl. Acad. Sci. U.S.A.">
        <title>The diploid genome sequence of Candida albicans.</title>
        <authorList>
            <person name="Jones T."/>
            <person name="Federspiel N.A."/>
            <person name="Chibana H."/>
            <person name="Dungan J."/>
            <person name="Kalman S."/>
            <person name="Magee B.B."/>
            <person name="Newport G."/>
            <person name="Thorstenson Y.R."/>
            <person name="Agabian N."/>
            <person name="Magee P.T."/>
            <person name="Davis R.W."/>
            <person name="Scherer S."/>
        </authorList>
    </citation>
    <scope>NUCLEOTIDE SEQUENCE [LARGE SCALE GENOMIC DNA]</scope>
    <source>
        <strain>SC5314 / ATCC MYA-2876</strain>
    </source>
</reference>
<reference key="2">
    <citation type="journal article" date="2007" name="Genome Biol.">
        <title>Assembly of the Candida albicans genome into sixteen supercontigs aligned on the eight chromosomes.</title>
        <authorList>
            <person name="van het Hoog M."/>
            <person name="Rast T.J."/>
            <person name="Martchenko M."/>
            <person name="Grindle S."/>
            <person name="Dignard D."/>
            <person name="Hogues H."/>
            <person name="Cuomo C."/>
            <person name="Berriman M."/>
            <person name="Scherer S."/>
            <person name="Magee B.B."/>
            <person name="Whiteway M."/>
            <person name="Chibana H."/>
            <person name="Nantel A."/>
            <person name="Magee P.T."/>
        </authorList>
    </citation>
    <scope>GENOME REANNOTATION</scope>
    <source>
        <strain>SC5314 / ATCC MYA-2876</strain>
    </source>
</reference>
<reference key="3">
    <citation type="journal article" date="2013" name="Genome Biol.">
        <title>Assembly of a phased diploid Candida albicans genome facilitates allele-specific measurements and provides a simple model for repeat and indel structure.</title>
        <authorList>
            <person name="Muzzey D."/>
            <person name="Schwartz K."/>
            <person name="Weissman J.S."/>
            <person name="Sherlock G."/>
        </authorList>
    </citation>
    <scope>NUCLEOTIDE SEQUENCE [LARGE SCALE GENOMIC DNA]</scope>
    <scope>GENOME REANNOTATION</scope>
    <source>
        <strain>SC5314 / ATCC MYA-2876</strain>
    </source>
</reference>
<reference key="4">
    <citation type="journal article" date="2003" name="Yeast">
        <title>Genome-wide identification of fungal GPI proteins.</title>
        <authorList>
            <person name="De Groot P.W."/>
            <person name="Hellingwerf K.J."/>
            <person name="Klis F.M."/>
        </authorList>
    </citation>
    <scope>PREDICTION OF GPI-ANCHOR</scope>
</reference>
<reference key="5">
    <citation type="journal article" date="2014" name="Eukaryot. Cell">
        <title>Candida albicans specific genes: distinct roles in host-pathogen interactions.</title>
        <authorList>
            <person name="Wilson D."/>
            <person name="Mayer F.L."/>
            <person name="Miramon P."/>
            <person name="Slesiona S."/>
            <person name="Jacobsen I.D."/>
            <person name="Hube B."/>
        </authorList>
    </citation>
    <scope>DISRUPTION PHENOTYPE</scope>
    <scope>FUNCTION</scope>
</reference>
<name>PGA16_CANAL</name>
<gene>
    <name type="primary">PGA16</name>
    <name type="ordered locus">CAALFM_C203720WA</name>
    <name type="ORF">CaO19.8468</name>
    <name type="ORF">CaO19.848</name>
</gene>
<accession>Q5AHE8</accession>
<accession>A0A1D8PH15</accession>
<accession>Q5AHS3</accession>
<comment type="function">
    <text evidence="3">Cell surface GPI-anchored protein required for virulence. Mediates hyphal ramification which is important for the interaction with host cells.</text>
</comment>
<comment type="subcellular location">
    <subcellularLocation>
        <location evidence="4">Cell membrane</location>
        <topology evidence="4">Lipid-anchor</topology>
        <topology evidence="4">GPI-anchor</topology>
    </subcellularLocation>
</comment>
<comment type="disruption phenotype">
    <text evidence="3">Leads to strong defects in host cell damage in a model of human oral epithelial cells, increased survival of infected mice, and aberrant filamentous morphology.</text>
</comment>
<organism>
    <name type="scientific">Candida albicans (strain SC5314 / ATCC MYA-2876)</name>
    <name type="common">Yeast</name>
    <dbReference type="NCBI Taxonomy" id="237561"/>
    <lineage>
        <taxon>Eukaryota</taxon>
        <taxon>Fungi</taxon>
        <taxon>Dikarya</taxon>
        <taxon>Ascomycota</taxon>
        <taxon>Saccharomycotina</taxon>
        <taxon>Pichiomycetes</taxon>
        <taxon>Debaryomycetaceae</taxon>
        <taxon>Candida/Lodderomyces clade</taxon>
        <taxon>Candida</taxon>
    </lineage>
</organism>
<protein>
    <recommendedName>
        <fullName>Virulence factor PGA16</fullName>
    </recommendedName>
    <alternativeName>
        <fullName>Predicted GPI-anchored protein 16</fullName>
    </alternativeName>
</protein>
<feature type="signal peptide" evidence="1">
    <location>
        <begin position="1"/>
        <end position="18"/>
    </location>
</feature>
<feature type="chain" id="PRO_0000424919" description="Virulence factor PGA16">
    <location>
        <begin position="19"/>
        <end position="76"/>
    </location>
</feature>
<feature type="propeptide" id="PRO_0000424920" description="Removed in mature form" evidence="1">
    <location>
        <begin position="77"/>
        <end position="107"/>
    </location>
</feature>
<feature type="region of interest" description="Disordered" evidence="2">
    <location>
        <begin position="26"/>
        <end position="56"/>
    </location>
</feature>
<feature type="compositionally biased region" description="Low complexity" evidence="2">
    <location>
        <begin position="33"/>
        <end position="56"/>
    </location>
</feature>
<feature type="lipid moiety-binding region" description="GPI-anchor amidated glycine" evidence="1">
    <location>
        <position position="76"/>
    </location>
</feature>
<feature type="glycosylation site" description="N-linked (GlcNAc...) asparagine" evidence="1">
    <location>
        <position position="53"/>
    </location>
</feature>
<feature type="glycosylation site" description="N-linked (GlcNAc...) asparagine" evidence="1">
    <location>
        <position position="56"/>
    </location>
</feature>
<dbReference type="EMBL" id="CP017624">
    <property type="protein sequence ID" value="AOW27403.1"/>
    <property type="molecule type" value="Genomic_DNA"/>
</dbReference>
<dbReference type="RefSeq" id="XP_720972.1">
    <property type="nucleotide sequence ID" value="XM_715879.1"/>
</dbReference>
<dbReference type="GlyCosmos" id="Q5AHE8">
    <property type="glycosylation" value="2 sites, No reported glycans"/>
</dbReference>
<dbReference type="EnsemblFungi" id="C2_03720W_A-T">
    <property type="protein sequence ID" value="C2_03720W_A-T-p1"/>
    <property type="gene ID" value="C2_03720W_A"/>
</dbReference>
<dbReference type="GeneID" id="3637373"/>
<dbReference type="KEGG" id="cal:CAALFM_C203720WA"/>
<dbReference type="CGD" id="CAL0000192099">
    <property type="gene designation" value="PGA16"/>
</dbReference>
<dbReference type="VEuPathDB" id="FungiDB:C2_03720W_A"/>
<dbReference type="HOGENOM" id="CLU_2236222_0_0_1"/>
<dbReference type="InParanoid" id="Q5AHE8"/>
<dbReference type="OMA" id="FQIVYIL"/>
<dbReference type="OrthoDB" id="10473600at2759"/>
<dbReference type="PHI-base" id="PHI:4657"/>
<dbReference type="PRO" id="PR:Q5AHE8"/>
<dbReference type="Proteomes" id="UP000000559">
    <property type="component" value="Chromosome 2"/>
</dbReference>
<dbReference type="GO" id="GO:0005886">
    <property type="term" value="C:plasma membrane"/>
    <property type="evidence" value="ECO:0007669"/>
    <property type="project" value="UniProtKB-SubCell"/>
</dbReference>
<dbReference type="GO" id="GO:0098552">
    <property type="term" value="C:side of membrane"/>
    <property type="evidence" value="ECO:0007669"/>
    <property type="project" value="UniProtKB-KW"/>
</dbReference>
<sequence>MRVFQIVYILIISNLIYATSGGGTSSHHHKNDNNIADNTNNNNNNNNNNNNNNITNATTTRTVTTSTKTKTHTGGGVAAMGGILGQNGWFYGDAGLMAAIFGAMLLL</sequence>
<evidence type="ECO:0000255" key="1"/>
<evidence type="ECO:0000256" key="2">
    <source>
        <dbReference type="SAM" id="MobiDB-lite"/>
    </source>
</evidence>
<evidence type="ECO:0000269" key="3">
    <source>
    </source>
</evidence>
<evidence type="ECO:0000305" key="4"/>
<proteinExistence type="evidence at protein level"/>